<sequence length="282" mass="32136">MKLIPRSSDISPGIDGICPGPFPPNGFTVLTDAAYGNGDCFGLYWPIGQEHKLPIVCETYHDEWRIVPAFSSIKKFEEWLEVNDDDPHENGISIEDQDFAANLFRVARKCLSTGRLDDALPLLQRATEQLPEVSEYWLALAIQYRRCKKTEAAAQAALNAYLGNWAFGVPDNKVIHLLSQAADVPNFQDDPVIQCIKEQGLDLSFGGTKENNNYPLMQMCVDTYFAQRKPLQALTLLHNYAWIMSSETTAFQERYDFNIDEWRAKFRQLCLEYFGDSRTQFT</sequence>
<organism>
    <name type="scientific">Escherichia coli (strain K12)</name>
    <dbReference type="NCBI Taxonomy" id="83333"/>
    <lineage>
        <taxon>Bacteria</taxon>
        <taxon>Pseudomonadati</taxon>
        <taxon>Pseudomonadota</taxon>
        <taxon>Gammaproteobacteria</taxon>
        <taxon>Enterobacterales</taxon>
        <taxon>Enterobacteriaceae</taxon>
        <taxon>Escherichia</taxon>
    </lineage>
</organism>
<evidence type="ECO:0000305" key="1"/>
<dbReference type="EMBL" id="U00096">
    <property type="protein sequence ID" value="AAC75335.2"/>
    <property type="molecule type" value="Genomic_DNA"/>
</dbReference>
<dbReference type="EMBL" id="AP009048">
    <property type="protein sequence ID" value="BAE76683.1"/>
    <property type="status" value="ALT_INIT"/>
    <property type="molecule type" value="Genomic_DNA"/>
</dbReference>
<dbReference type="PIR" id="A64999">
    <property type="entry name" value="A64999"/>
</dbReference>
<dbReference type="RefSeq" id="NP_416778.2">
    <property type="nucleotide sequence ID" value="NC_000913.3"/>
</dbReference>
<dbReference type="RefSeq" id="WP_000767280.1">
    <property type="nucleotide sequence ID" value="NZ_LN832404.1"/>
</dbReference>
<dbReference type="SMR" id="P76486"/>
<dbReference type="BioGRID" id="4260886">
    <property type="interactions" value="3"/>
</dbReference>
<dbReference type="BioGRID" id="851095">
    <property type="interactions" value="1"/>
</dbReference>
<dbReference type="FunCoup" id="P76486">
    <property type="interactions" value="2"/>
</dbReference>
<dbReference type="IntAct" id="P76486">
    <property type="interactions" value="1"/>
</dbReference>
<dbReference type="STRING" id="511145.b2275"/>
<dbReference type="PaxDb" id="511145-b2275"/>
<dbReference type="EnsemblBacteria" id="AAC75335">
    <property type="protein sequence ID" value="AAC75335"/>
    <property type="gene ID" value="b2275"/>
</dbReference>
<dbReference type="GeneID" id="946754"/>
<dbReference type="KEGG" id="ecj:JW2270"/>
<dbReference type="KEGG" id="eco:b2275"/>
<dbReference type="KEGG" id="ecoc:C3026_12700"/>
<dbReference type="PATRIC" id="fig|511145.12.peg.2368"/>
<dbReference type="EchoBASE" id="EB3853"/>
<dbReference type="eggNOG" id="COG0457">
    <property type="taxonomic scope" value="Bacteria"/>
</dbReference>
<dbReference type="HOGENOM" id="CLU_100927_0_0_6"/>
<dbReference type="InParanoid" id="P76486"/>
<dbReference type="OMA" id="FVHRISE"/>
<dbReference type="OrthoDB" id="1416614at2"/>
<dbReference type="BioCyc" id="EcoCyc:G7182-MONOMER"/>
<dbReference type="PRO" id="PR:P76486"/>
<dbReference type="Proteomes" id="UP000000625">
    <property type="component" value="Chromosome"/>
</dbReference>
<dbReference type="Gene3D" id="1.25.40.10">
    <property type="entry name" value="Tetratricopeptide repeat domain"/>
    <property type="match status" value="1"/>
</dbReference>
<dbReference type="InterPro" id="IPR011990">
    <property type="entry name" value="TPR-like_helical_dom_sf"/>
</dbReference>
<dbReference type="SUPFAM" id="SSF48452">
    <property type="entry name" value="TPR-like"/>
    <property type="match status" value="1"/>
</dbReference>
<comment type="sequence caution" evidence="1">
    <conflict type="erroneous initiation">
        <sequence resource="EMBL-CDS" id="BAE76683"/>
    </conflict>
    <text>Extended N-terminus.</text>
</comment>
<proteinExistence type="predicted"/>
<name>YFBP_ECOLI</name>
<accession>P76486</accession>
<accession>Q2MAM3</accession>
<gene>
    <name type="primary">yfbP</name>
    <name type="ordered locus">b2275</name>
    <name type="ordered locus">JW2270</name>
</gene>
<feature type="chain" id="PRO_0000169183" description="Uncharacterized protein YfbP">
    <location>
        <begin position="1"/>
        <end position="282"/>
    </location>
</feature>
<reference key="1">
    <citation type="journal article" date="1997" name="Science">
        <title>The complete genome sequence of Escherichia coli K-12.</title>
        <authorList>
            <person name="Blattner F.R."/>
            <person name="Plunkett G. III"/>
            <person name="Bloch C.A."/>
            <person name="Perna N.T."/>
            <person name="Burland V."/>
            <person name="Riley M."/>
            <person name="Collado-Vides J."/>
            <person name="Glasner J.D."/>
            <person name="Rode C.K."/>
            <person name="Mayhew G.F."/>
            <person name="Gregor J."/>
            <person name="Davis N.W."/>
            <person name="Kirkpatrick H.A."/>
            <person name="Goeden M.A."/>
            <person name="Rose D.J."/>
            <person name="Mau B."/>
            <person name="Shao Y."/>
        </authorList>
    </citation>
    <scope>NUCLEOTIDE SEQUENCE [LARGE SCALE GENOMIC DNA]</scope>
    <source>
        <strain>K12 / MG1655 / ATCC 47076</strain>
    </source>
</reference>
<reference key="2">
    <citation type="journal article" date="2006" name="Mol. Syst. Biol.">
        <title>Highly accurate genome sequences of Escherichia coli K-12 strains MG1655 and W3110.</title>
        <authorList>
            <person name="Hayashi K."/>
            <person name="Morooka N."/>
            <person name="Yamamoto Y."/>
            <person name="Fujita K."/>
            <person name="Isono K."/>
            <person name="Choi S."/>
            <person name="Ohtsubo E."/>
            <person name="Baba T."/>
            <person name="Wanner B.L."/>
            <person name="Mori H."/>
            <person name="Horiuchi T."/>
        </authorList>
    </citation>
    <scope>NUCLEOTIDE SEQUENCE [LARGE SCALE GENOMIC DNA]</scope>
    <source>
        <strain>K12 / W3110 / ATCC 27325 / DSM 5911</strain>
    </source>
</reference>
<protein>
    <recommendedName>
        <fullName>Uncharacterized protein YfbP</fullName>
    </recommendedName>
</protein>
<keyword id="KW-1185">Reference proteome</keyword>